<sequence length="347" mass="37779">MCSLITQLCDAGQLADYVGLGWLNAVSSQPYLVQALGLQPPPRRVDVDAAFRDAKGLHGHQPWVATPLPGQTVRALFIGINYYGTSAALSGCCNDVKQMLATLQKKGLPINEAVILVDEDNFPGRTDQPTRDNIVRYMAWLVKDAKPGDVLFFHYSGHGTQCKSRGDSDEKYDQCIAPVDFQKSGCIVDDDIHKLLFSRLPEKVRLTAVFDCCHSGSIMDLPFTYVCSGGEQASGTPHMKRIREGNDVLGDVMMISGCADEQTSADVKNTATFGTGSTGAGGAATQCITCMLMNNQSLSYGKLLIETRDMLKRKGFKQVPQLSASKAIDLDQTFSLTEMFSVDRSIQ</sequence>
<dbReference type="EC" id="3.4.22.-" evidence="3 4 5 6"/>
<dbReference type="EMBL" id="CP000069">
    <property type="protein sequence ID" value="AAZ11657.1"/>
    <property type="molecule type" value="Genomic_DNA"/>
</dbReference>
<dbReference type="EMBL" id="AC073906">
    <property type="protein sequence ID" value="AAX80349.1"/>
    <property type="molecule type" value="Genomic_DNA"/>
</dbReference>
<dbReference type="RefSeq" id="XP_845216.1">
    <property type="nucleotide sequence ID" value="XM_840123.1"/>
</dbReference>
<dbReference type="PDB" id="4AF8">
    <property type="method" value="X-ray"/>
    <property type="resolution" value="1.40 A"/>
    <property type="chains" value="A=1-347"/>
</dbReference>
<dbReference type="PDB" id="4AFP">
    <property type="method" value="X-ray"/>
    <property type="resolution" value="2.10 A"/>
    <property type="chains" value="A=1-347"/>
</dbReference>
<dbReference type="PDB" id="4AFR">
    <property type="method" value="X-ray"/>
    <property type="resolution" value="1.60 A"/>
    <property type="chains" value="A=1-347"/>
</dbReference>
<dbReference type="PDB" id="4AFV">
    <property type="method" value="X-ray"/>
    <property type="resolution" value="1.50 A"/>
    <property type="chains" value="A=1-347"/>
</dbReference>
<dbReference type="PDBsum" id="4AF8"/>
<dbReference type="PDBsum" id="4AFP"/>
<dbReference type="PDBsum" id="4AFR"/>
<dbReference type="PDBsum" id="4AFV"/>
<dbReference type="SMR" id="Q585F3"/>
<dbReference type="FunCoup" id="Q585F3">
    <property type="interactions" value="212"/>
</dbReference>
<dbReference type="MEROPS" id="C14.044"/>
<dbReference type="PaxDb" id="5691-AAZ11657"/>
<dbReference type="GeneID" id="3657732"/>
<dbReference type="KEGG" id="tbr:Tb927.6.940"/>
<dbReference type="VEuPathDB" id="TriTrypDB:Tb927.6.940"/>
<dbReference type="eggNOG" id="KOG1546">
    <property type="taxonomic scope" value="Eukaryota"/>
</dbReference>
<dbReference type="InParanoid" id="Q585F3"/>
<dbReference type="OMA" id="IRMALQW"/>
<dbReference type="OrthoDB" id="276009at2759"/>
<dbReference type="EvolutionaryTrace" id="Q585F3"/>
<dbReference type="Proteomes" id="UP000008524">
    <property type="component" value="Chromosome 6"/>
</dbReference>
<dbReference type="GO" id="GO:0005737">
    <property type="term" value="C:cytoplasm"/>
    <property type="evidence" value="ECO:0000318"/>
    <property type="project" value="GO_Central"/>
</dbReference>
<dbReference type="GO" id="GO:0005634">
    <property type="term" value="C:nucleus"/>
    <property type="evidence" value="ECO:0000314"/>
    <property type="project" value="GeneDB"/>
</dbReference>
<dbReference type="GO" id="GO:0055037">
    <property type="term" value="C:recycling endosome"/>
    <property type="evidence" value="ECO:0007669"/>
    <property type="project" value="UniProtKB-SubCell"/>
</dbReference>
<dbReference type="GO" id="GO:0004197">
    <property type="term" value="F:cysteine-type endopeptidase activity"/>
    <property type="evidence" value="ECO:0000314"/>
    <property type="project" value="UniProtKB"/>
</dbReference>
<dbReference type="GO" id="GO:0008234">
    <property type="term" value="F:cysteine-type peptidase activity"/>
    <property type="evidence" value="ECO:0000314"/>
    <property type="project" value="GeneDB"/>
</dbReference>
<dbReference type="GO" id="GO:0046872">
    <property type="term" value="F:metal ion binding"/>
    <property type="evidence" value="ECO:0007669"/>
    <property type="project" value="UniProtKB-KW"/>
</dbReference>
<dbReference type="GO" id="GO:0006508">
    <property type="term" value="P:proteolysis"/>
    <property type="evidence" value="ECO:0000314"/>
    <property type="project" value="UniProtKB"/>
</dbReference>
<dbReference type="FunFam" id="3.40.50.12660:FF:000003">
    <property type="entry name" value="Metacaspase MCA2"/>
    <property type="match status" value="1"/>
</dbReference>
<dbReference type="Gene3D" id="3.40.50.12660">
    <property type="match status" value="1"/>
</dbReference>
<dbReference type="InterPro" id="IPR029030">
    <property type="entry name" value="Caspase-like_dom_sf"/>
</dbReference>
<dbReference type="InterPro" id="IPR050452">
    <property type="entry name" value="Metacaspase"/>
</dbReference>
<dbReference type="InterPro" id="IPR011600">
    <property type="entry name" value="Pept_C14_caspase"/>
</dbReference>
<dbReference type="PANTHER" id="PTHR48104:SF30">
    <property type="entry name" value="METACASPASE-1"/>
    <property type="match status" value="1"/>
</dbReference>
<dbReference type="PANTHER" id="PTHR48104">
    <property type="entry name" value="METACASPASE-4"/>
    <property type="match status" value="1"/>
</dbReference>
<dbReference type="Pfam" id="PF00656">
    <property type="entry name" value="Peptidase_C14"/>
    <property type="match status" value="1"/>
</dbReference>
<dbReference type="SUPFAM" id="SSF52129">
    <property type="entry name" value="Caspase-like"/>
    <property type="match status" value="1"/>
</dbReference>
<name>MCA2_TRYB2</name>
<reference evidence="13" key="1">
    <citation type="journal article" date="2005" name="Science">
        <title>Comparative genomics of trypanosomatid parasitic protozoa.</title>
        <authorList>
            <person name="El-Sayed N.M."/>
            <person name="Myler P.J."/>
            <person name="Blandin G."/>
            <person name="Berriman M."/>
            <person name="Crabtree J."/>
            <person name="Aggarwal G."/>
            <person name="Caler E."/>
            <person name="Renauld H."/>
            <person name="Worthey E.A."/>
            <person name="Hertz-Fowler C."/>
            <person name="Ghedin E."/>
            <person name="Peacock C."/>
            <person name="Bartholomeu D.C."/>
            <person name="Haas B.J."/>
            <person name="Tran A.N."/>
            <person name="Wortman J.R."/>
            <person name="Alsmark U.C."/>
            <person name="Angiuoli S."/>
            <person name="Anupama A."/>
            <person name="Badger J."/>
            <person name="Bringaud F."/>
            <person name="Cadag E."/>
            <person name="Carlton J.M."/>
            <person name="Cerqueira G.C."/>
            <person name="Creasy T."/>
            <person name="Delcher A.L."/>
            <person name="Djikeng A."/>
            <person name="Embley T.M."/>
            <person name="Hauser C."/>
            <person name="Ivens A.C."/>
            <person name="Kummerfeld S.K."/>
            <person name="Pereira-Leal J.B."/>
            <person name="Nilsson D."/>
            <person name="Peterson J."/>
            <person name="Salzberg S.L."/>
            <person name="Shallom J."/>
            <person name="Silva J.C."/>
            <person name="Sundaram J."/>
            <person name="Westenberger S."/>
            <person name="White O."/>
            <person name="Melville S.E."/>
            <person name="Donelson J.E."/>
            <person name="Andersson B."/>
            <person name="Stuart K.D."/>
            <person name="Hall N."/>
        </authorList>
    </citation>
    <scope>NUCLEOTIDE SEQUENCE [LARGE SCALE GENOMIC DNA]</scope>
    <source>
        <strain evidence="13">927/4 GUTat10.1</strain>
    </source>
</reference>
<reference evidence="14" key="2">
    <citation type="journal article" date="2005" name="Science">
        <title>The genome of the African trypanosome Trypanosoma brucei.</title>
        <authorList>
            <person name="Berriman M."/>
            <person name="Ghedin E."/>
            <person name="Hertz-Fowler C."/>
            <person name="Blandin G."/>
            <person name="Renauld H."/>
            <person name="Bartholomeu D.C."/>
            <person name="Lennard N.J."/>
            <person name="Caler E."/>
            <person name="Hamlin N.E."/>
            <person name="Haas B."/>
            <person name="Bohme U."/>
            <person name="Hannick L."/>
            <person name="Aslett M.A."/>
            <person name="Shallom J."/>
            <person name="Marcello L."/>
            <person name="Hou L."/>
            <person name="Wickstead B."/>
            <person name="Alsmark U.C.M."/>
            <person name="Arrowsmith C."/>
            <person name="Atkin R.J."/>
            <person name="Barron A.J."/>
            <person name="Bringaud F."/>
            <person name="Brooks K."/>
            <person name="Carrington M."/>
            <person name="Cherevach I."/>
            <person name="Chillingworth T.J."/>
            <person name="Churcher C."/>
            <person name="Clark L.N."/>
            <person name="Corton C.H."/>
            <person name="Cronin A."/>
            <person name="Davies R.M."/>
            <person name="Doggett J."/>
            <person name="Djikeng A."/>
            <person name="Feldblyum T."/>
            <person name="Field M.C."/>
            <person name="Fraser A."/>
            <person name="Goodhead I."/>
            <person name="Hance Z."/>
            <person name="Harper D."/>
            <person name="Harris B.R."/>
            <person name="Hauser H."/>
            <person name="Hostetler J."/>
            <person name="Ivens A."/>
            <person name="Jagels K."/>
            <person name="Johnson D."/>
            <person name="Johnson J."/>
            <person name="Jones K."/>
            <person name="Kerhornou A.X."/>
            <person name="Koo H."/>
            <person name="Larke N."/>
            <person name="Landfear S."/>
            <person name="Larkin C."/>
            <person name="Leech V."/>
            <person name="Line A."/>
            <person name="Lord A."/>
            <person name="Macleod A."/>
            <person name="Mooney P.J."/>
            <person name="Moule S."/>
            <person name="Martin D.M."/>
            <person name="Morgan G.W."/>
            <person name="Mungall K."/>
            <person name="Norbertczak H."/>
            <person name="Ormond D."/>
            <person name="Pai G."/>
            <person name="Peacock C.S."/>
            <person name="Peterson J."/>
            <person name="Quail M.A."/>
            <person name="Rabbinowitsch E."/>
            <person name="Rajandream M.A."/>
            <person name="Reitter C."/>
            <person name="Salzberg S.L."/>
            <person name="Sanders M."/>
            <person name="Schobel S."/>
            <person name="Sharp S."/>
            <person name="Simmonds M."/>
            <person name="Simpson A.J."/>
            <person name="Tallon L."/>
            <person name="Turner C.M."/>
            <person name="Tait A."/>
            <person name="Tivey A.R."/>
            <person name="Van Aken S."/>
            <person name="Walker D."/>
            <person name="Wanless D."/>
            <person name="Wang S."/>
            <person name="White B."/>
            <person name="White O."/>
            <person name="Whitehead S."/>
            <person name="Woodward J."/>
            <person name="Wortman J."/>
            <person name="Adams M.D."/>
            <person name="Embley T.M."/>
            <person name="Gull K."/>
            <person name="Ullu E."/>
            <person name="Barry J.D."/>
            <person name="Fairlamb A.H."/>
            <person name="Opperdoes F."/>
            <person name="Barrell B.G."/>
            <person name="Donelson J.E."/>
            <person name="Hall N."/>
            <person name="Fraser C.M."/>
            <person name="Melville S.E."/>
            <person name="El-Sayed N.M.A."/>
        </authorList>
    </citation>
    <scope>NUCLEOTIDE SEQUENCE [LARGE SCALE GENOMIC DNA]</scope>
    <source>
        <strain evidence="14">927/4 GUTat10.1</strain>
    </source>
</reference>
<reference evidence="9" key="3">
    <citation type="journal article" date="2007" name="FEBS Lett.">
        <title>Metacaspase 2 of Trypanosoma brucei is a calcium-dependent cysteine peptidase active without processing.</title>
        <authorList>
            <person name="Moss C.X."/>
            <person name="Westrop G.D."/>
            <person name="Juliano L."/>
            <person name="Coombs G.H."/>
            <person name="Mottram J.C."/>
        </authorList>
    </citation>
    <scope>FUNCTION</scope>
    <scope>CATALYTIC ACTIVITY</scope>
    <scope>ACTIVITY REGULATION</scope>
    <scope>PROTEOLYTIC CLEAVAGE</scope>
    <scope>ACTIVE SITE</scope>
    <scope>MUTAGENESIS OF LYS-55; CYS-212; CYS-213 AND LYS-268</scope>
</reference>
<reference evidence="9" key="4">
    <citation type="journal article" date="2013" name="FEBS J.">
        <title>Substrate specificity and the effect of calcium on Trypanosoma brucei metacaspase 2.</title>
        <authorList>
            <person name="Machado M.F."/>
            <person name="Marcondes M.F."/>
            <person name="Juliano M.A."/>
            <person name="McLuskey K."/>
            <person name="Mottram J.C."/>
            <person name="Moss C.X."/>
            <person name="Juliano L."/>
            <person name="Oliveira V."/>
        </authorList>
    </citation>
    <scope>FUNCTION</scope>
    <scope>CATALYTIC ACTIVITY</scope>
    <scope>ACTIVITY REGULATION</scope>
    <scope>BIOPHYSICOCHEMICAL PROPERTIES</scope>
    <scope>DOMAIN</scope>
</reference>
<reference evidence="9" key="5">
    <citation type="journal article" date="2017" name="Biochim. Biophys. Acta">
        <title>Processing of metacaspase 2 from Trypanosoma brucei (TbMCA2) broadens its substrate specificity.</title>
        <authorList>
            <person name="Gilio J.M."/>
            <person name="Marcondes M.F."/>
            <person name="Ferrari D."/>
            <person name="Juliano M.A."/>
            <person name="Juliano L."/>
            <person name="Oliveira V."/>
            <person name="Machado M.F.M."/>
        </authorList>
    </citation>
    <scope>CATALYTIC ACTIVITY</scope>
    <scope>ACTIVITY REGULATION</scope>
    <scope>BIOPHYSICOCHEMICAL PROPERTIES</scope>
    <scope>PROTEOLYTIC CLEAVAGE</scope>
    <scope>MUTAGENESIS OF LYS-55 AND LYS-268</scope>
</reference>
<reference evidence="15 16 17" key="6">
    <citation type="journal article" date="2012" name="Proc. Natl. Acad. Sci. U.S.A.">
        <title>Crystal structure of a Trypanosoma brucei metacaspase.</title>
        <authorList>
            <person name="McLuskey K."/>
            <person name="Rudolf J."/>
            <person name="Proto W.R."/>
            <person name="Isaacs N.W."/>
            <person name="Coombs G.H."/>
            <person name="Moss C.X."/>
            <person name="Mottram J.C."/>
        </authorList>
    </citation>
    <scope>X-RAY CRYSTALLOGRAPHY (1.40 ANGSTROMS) OF MUTANTS GLY-213 AND ALA-213</scope>
    <scope>CATALYTIC ACTIVITY</scope>
    <scope>ACTIVITY REGULATION</scope>
    <scope>SUBUNIT</scope>
    <scope>PROTEOLYTIC CLEAVAGE</scope>
    <scope>MUTAGENESIS OF TYR-31; CYS-92; ASP-95; SER-156; 189-ASP--ASP-190 AND ASP-211</scope>
</reference>
<comment type="function">
    <text evidence="3 5">Cysteine protease that cleaves specifically after arginine or lysine residues.</text>
</comment>
<comment type="activity regulation">
    <text evidence="3 4 5 6">Activated by Ca(2+) (PubMed:18005666, PubMed:22529389, PubMed:23506317, PubMed:28089596). In response to calcium binding, the 280-loop, a disordered loop consisting of residues 269-275, undergoes a conformational change which stabilizes substrates in the active site (PubMed:22529389). The binding to the substrate triggers the release of the N-terminal region resulting in the activation of the enzyme (PubMed:22529389). Proteolytic cleavage is required for catalytic activity towards large protein substrates (PubMed:28089596).</text>
</comment>
<comment type="biophysicochemical properties">
    <phDependence>
        <text evidence="5 6">Optimum pH is 7.7.</text>
    </phDependence>
    <temperatureDependence>
        <text evidence="5">Optimum temperature is 20-25 degrees Celsius.</text>
    </temperatureDependence>
</comment>
<comment type="subunit">
    <text evidence="4">Monomer.</text>
</comment>
<comment type="subcellular location">
    <subcellularLocation>
        <location evidence="2">Recycling endosome</location>
    </subcellularLocation>
</comment>
<comment type="domain">
    <text evidence="5">There are 2 calcium binding sites with high and low affinity, respectively.</text>
</comment>
<comment type="PTM">
    <text evidence="2 3 4 6">Auto-proteolytic cleavage of the propeptide after Lys-55 and between the large and small subunits after Lys-268 is required for catalytic activity towards large protein substrates but is dispensable towards small oligopeptide substrates (PubMed:18005666, PubMed:22529389, PubMed:28089596). After processing, the propeptide and the large and small subunits remain associated by non-covalent bonds (PubMed:18005666). In vivo, the unprocessed enzyme appears to be the predominant form (By similarity).</text>
</comment>
<comment type="similarity">
    <text evidence="9">Belongs to the peptidase C14B family.</text>
</comment>
<protein>
    <recommendedName>
        <fullName evidence="9">Metacaspase-2</fullName>
        <ecNumber evidence="3 4 5 6">3.4.22.-</ecNumber>
    </recommendedName>
    <alternativeName>
        <fullName evidence="8">TbMCA2</fullName>
    </alternativeName>
    <component>
        <recommendedName>
            <fullName evidence="9">Large subunit p20</fullName>
        </recommendedName>
    </component>
    <component>
        <recommendedName>
            <fullName evidence="9">Small subunit p10</fullName>
        </recommendedName>
    </component>
</protein>
<evidence type="ECO:0000250" key="1">
    <source>
        <dbReference type="UniProtKB" id="Q08601"/>
    </source>
</evidence>
<evidence type="ECO:0000250" key="2">
    <source>
        <dbReference type="UniProtKB" id="Q8T8E7"/>
    </source>
</evidence>
<evidence type="ECO:0000269" key="3">
    <source>
    </source>
</evidence>
<evidence type="ECO:0000269" key="4">
    <source>
    </source>
</evidence>
<evidence type="ECO:0000269" key="5">
    <source>
    </source>
</evidence>
<evidence type="ECO:0000269" key="6">
    <source>
    </source>
</evidence>
<evidence type="ECO:0000303" key="7">
    <source>
    </source>
</evidence>
<evidence type="ECO:0000303" key="8">
    <source>
    </source>
</evidence>
<evidence type="ECO:0000305" key="9"/>
<evidence type="ECO:0000305" key="10">
    <source>
    </source>
</evidence>
<evidence type="ECO:0000305" key="11">
    <source>
    </source>
</evidence>
<evidence type="ECO:0000312" key="12">
    <source>
        <dbReference type="EMBL" id="AAX80349.1"/>
    </source>
</evidence>
<evidence type="ECO:0000312" key="13">
    <source>
        <dbReference type="EMBL" id="AAZ11657.1"/>
    </source>
</evidence>
<evidence type="ECO:0000312" key="14">
    <source>
        <dbReference type="Proteomes" id="UP000008524"/>
    </source>
</evidence>
<evidence type="ECO:0007744" key="15">
    <source>
        <dbReference type="PDB" id="4AF8"/>
    </source>
</evidence>
<evidence type="ECO:0007744" key="16">
    <source>
        <dbReference type="PDB" id="4AFP"/>
    </source>
</evidence>
<evidence type="ECO:0007744" key="17">
    <source>
        <dbReference type="PDB" id="4AFR"/>
    </source>
</evidence>
<evidence type="ECO:0007829" key="18">
    <source>
        <dbReference type="PDB" id="4AF8"/>
    </source>
</evidence>
<evidence type="ECO:0007829" key="19">
    <source>
        <dbReference type="PDB" id="4AFR"/>
    </source>
</evidence>
<evidence type="ECO:0007829" key="20">
    <source>
        <dbReference type="PDB" id="4AFV"/>
    </source>
</evidence>
<proteinExistence type="evidence at protein level"/>
<gene>
    <name evidence="7" type="primary">MCA2</name>
    <name evidence="12" type="ORF">Tb927.6.940</name>
</gene>
<feature type="propeptide" id="PRO_0000451273" evidence="3">
    <location>
        <begin position="1"/>
        <end position="55"/>
    </location>
</feature>
<feature type="chain" id="PRO_0000451274" description="Metacaspase-2">
    <location>
        <begin position="56"/>
        <end position="347"/>
    </location>
</feature>
<feature type="chain" id="PRO_0000451275" description="Large subunit p20" evidence="3">
    <location>
        <begin position="56"/>
        <end position="268"/>
    </location>
</feature>
<feature type="chain" id="PRO_0000451276" description="Small subunit p10" evidence="3">
    <location>
        <begin position="269"/>
        <end position="347"/>
    </location>
</feature>
<feature type="region of interest" description="Regulates substrate access to the active site" evidence="11">
    <location>
        <begin position="1"/>
        <end position="70"/>
    </location>
</feature>
<feature type="active site" evidence="1">
    <location>
        <position position="158"/>
    </location>
</feature>
<feature type="active site" evidence="10">
    <location>
        <position position="213"/>
    </location>
</feature>
<feature type="binding site" evidence="4 16">
    <location>
        <position position="173"/>
    </location>
    <ligand>
        <name>Ca(2+)</name>
        <dbReference type="ChEBI" id="CHEBI:29108"/>
    </ligand>
</feature>
<feature type="binding site" evidence="4 16">
    <location>
        <position position="189"/>
    </location>
    <ligand>
        <name>Ca(2+)</name>
        <dbReference type="ChEBI" id="CHEBI:29108"/>
    </ligand>
</feature>
<feature type="binding site" evidence="4 16">
    <location>
        <position position="190"/>
    </location>
    <ligand>
        <name>Ca(2+)</name>
        <dbReference type="ChEBI" id="CHEBI:29108"/>
    </ligand>
</feature>
<feature type="binding site" evidence="4 16">
    <location>
        <position position="220"/>
    </location>
    <ligand>
        <name>Ca(2+)</name>
        <dbReference type="ChEBI" id="CHEBI:29108"/>
    </ligand>
</feature>
<feature type="site" description="Cleavage; by autolysis" evidence="3">
    <location>
        <begin position="55"/>
        <end position="56"/>
    </location>
</feature>
<feature type="site" description="Important for Arg/Lys-specific substrate specificity" evidence="4">
    <location>
        <position position="95"/>
    </location>
</feature>
<feature type="site" description="Important for Arg/Lys-specific substrate specificity" evidence="4">
    <location>
        <position position="211"/>
    </location>
</feature>
<feature type="site" description="Cleavage; by autolysis" evidence="3">
    <location>
        <position position="268"/>
    </location>
</feature>
<feature type="mutagenesis site" description="Increases autoprocessing resulting in the degradation of the enzyme." evidence="4">
    <original>Y</original>
    <variation>A</variation>
    <location>
        <position position="31"/>
    </location>
</feature>
<feature type="mutagenesis site" description="Loss of autoprocessing. Loss of catalytic activity towards large protein substrates, no effect on catalytic activity towards short oligopeptide substrates, reduces affinity of the high affinity Ca(2+) binding site, shifts optimum pH for activity towards basic pH; when associated with G-268." evidence="3 6">
    <original>K</original>
    <variation>G</variation>
    <location>
        <position position="55"/>
    </location>
</feature>
<feature type="mutagenesis site" description="Reduced autoprocessing and 50% loss of catalytic activity towards substrates." evidence="4">
    <original>C</original>
    <variation>A</variation>
    <location>
        <position position="92"/>
    </location>
</feature>
<feature type="mutagenesis site" description="Loss of autoprocessing and catalytic activity towards substrates." evidence="4">
    <original>D</original>
    <variation>A</variation>
    <location>
        <position position="95"/>
    </location>
</feature>
<feature type="mutagenesis site" description="3-fold increase in catalytic activity towards substrates." evidence="4">
    <original>S</original>
    <variation>A</variation>
    <location>
        <position position="156"/>
    </location>
</feature>
<feature type="mutagenesis site" description="Loss of autoprocessing and catalytic activity towards substrates." evidence="4">
    <original>DD</original>
    <variation>AA</variation>
    <location>
        <begin position="189"/>
        <end position="190"/>
    </location>
</feature>
<feature type="mutagenesis site" description="Loss of autoprocessing and catalytic activity towards substrates." evidence="4">
    <original>D</original>
    <variation>A</variation>
    <location>
        <position position="211"/>
    </location>
</feature>
<feature type="mutagenesis site" description="Severe loss of catalytic activity." evidence="3">
    <original>C</original>
    <variation>G</variation>
    <location>
        <position position="212"/>
    </location>
</feature>
<feature type="mutagenesis site" description="Complete loss of catalytic activity." evidence="3">
    <original>C</original>
    <variation>G</variation>
    <location>
        <position position="213"/>
    </location>
</feature>
<feature type="mutagenesis site" description="Loss of autoprocessing. Loss of catalytic activity towards large protein substrates, no effect on catalytic activity towards short oligopeptide substrates, reduces affinity of the high affinity Ca(2+) binding site, shift optimum pH for activity towards basic pH; when associated with G-55." evidence="3 6">
    <original>K</original>
    <variation>G</variation>
    <location>
        <position position="268"/>
    </location>
</feature>
<feature type="turn" evidence="19">
    <location>
        <begin position="8"/>
        <end position="10"/>
    </location>
</feature>
<feature type="turn" evidence="18">
    <location>
        <begin position="17"/>
        <end position="24"/>
    </location>
</feature>
<feature type="strand" evidence="20">
    <location>
        <begin position="31"/>
        <end position="34"/>
    </location>
</feature>
<feature type="helix" evidence="18">
    <location>
        <begin position="47"/>
        <end position="54"/>
    </location>
</feature>
<feature type="strand" evidence="18">
    <location>
        <begin position="73"/>
        <end position="79"/>
    </location>
</feature>
<feature type="helix" evidence="18">
    <location>
        <begin position="92"/>
        <end position="105"/>
    </location>
</feature>
<feature type="strand" evidence="18">
    <location>
        <begin position="111"/>
        <end position="117"/>
    </location>
</feature>
<feature type="helix" evidence="18">
    <location>
        <begin position="131"/>
        <end position="143"/>
    </location>
</feature>
<feature type="strand" evidence="18">
    <location>
        <begin position="150"/>
        <end position="157"/>
    </location>
</feature>
<feature type="strand" evidence="18">
    <location>
        <begin position="159"/>
        <end position="162"/>
    </location>
</feature>
<feature type="strand" evidence="18">
    <location>
        <begin position="173"/>
        <end position="176"/>
    </location>
</feature>
<feature type="helix" evidence="18">
    <location>
        <begin position="181"/>
        <end position="184"/>
    </location>
</feature>
<feature type="helix" evidence="18">
    <location>
        <begin position="189"/>
        <end position="196"/>
    </location>
</feature>
<feature type="turn" evidence="18">
    <location>
        <begin position="197"/>
        <end position="199"/>
    </location>
</feature>
<feature type="strand" evidence="18">
    <location>
        <begin position="205"/>
        <end position="211"/>
    </location>
</feature>
<feature type="strand" evidence="18">
    <location>
        <begin position="222"/>
        <end position="226"/>
    </location>
</feature>
<feature type="strand" evidence="18">
    <location>
        <begin position="250"/>
        <end position="258"/>
    </location>
</feature>
<feature type="strand" evidence="20">
    <location>
        <begin position="278"/>
        <end position="281"/>
    </location>
</feature>
<feature type="helix" evidence="18">
    <location>
        <begin position="283"/>
        <end position="293"/>
    </location>
</feature>
<feature type="helix" evidence="18">
    <location>
        <begin position="300"/>
        <end position="313"/>
    </location>
</feature>
<feature type="strand" evidence="18">
    <location>
        <begin position="319"/>
        <end position="326"/>
    </location>
</feature>
<feature type="strand" evidence="18">
    <location>
        <begin position="336"/>
        <end position="338"/>
    </location>
</feature>
<organism evidence="14">
    <name type="scientific">Trypanosoma brucei brucei (strain 927/4 GUTat10.1)</name>
    <dbReference type="NCBI Taxonomy" id="185431"/>
    <lineage>
        <taxon>Eukaryota</taxon>
        <taxon>Discoba</taxon>
        <taxon>Euglenozoa</taxon>
        <taxon>Kinetoplastea</taxon>
        <taxon>Metakinetoplastina</taxon>
        <taxon>Trypanosomatida</taxon>
        <taxon>Trypanosomatidae</taxon>
        <taxon>Trypanosoma</taxon>
    </lineage>
</organism>
<accession>Q585F3</accession>
<accession>D6XHH8</accession>
<keyword id="KW-0002">3D-structure</keyword>
<keyword id="KW-0068">Autocatalytic cleavage</keyword>
<keyword id="KW-0106">Calcium</keyword>
<keyword id="KW-0967">Endosome</keyword>
<keyword id="KW-0378">Hydrolase</keyword>
<keyword id="KW-0479">Metal-binding</keyword>
<keyword id="KW-0645">Protease</keyword>
<keyword id="KW-1185">Reference proteome</keyword>
<keyword id="KW-0788">Thiol protease</keyword>
<keyword id="KW-0865">Zymogen</keyword>